<evidence type="ECO:0000255" key="1">
    <source>
        <dbReference type="HAMAP-Rule" id="MF_01694"/>
    </source>
</evidence>
<evidence type="ECO:0000255" key="2">
    <source>
        <dbReference type="PROSITE-ProRule" id="PRU01266"/>
    </source>
</evidence>
<organism>
    <name type="scientific">Paramagnetospirillum magneticum (strain ATCC 700264 / AMB-1)</name>
    <name type="common">Magnetospirillum magneticum</name>
    <dbReference type="NCBI Taxonomy" id="342108"/>
    <lineage>
        <taxon>Bacteria</taxon>
        <taxon>Pseudomonadati</taxon>
        <taxon>Pseudomonadota</taxon>
        <taxon>Alphaproteobacteria</taxon>
        <taxon>Rhodospirillales</taxon>
        <taxon>Magnetospirillaceae</taxon>
        <taxon>Paramagnetospirillum</taxon>
    </lineage>
</organism>
<protein>
    <recommendedName>
        <fullName evidence="1">Biotin synthase</fullName>
        <ecNumber evidence="1">2.8.1.6</ecNumber>
    </recommendedName>
</protein>
<dbReference type="EC" id="2.8.1.6" evidence="1"/>
<dbReference type="EMBL" id="AP007255">
    <property type="protein sequence ID" value="BAE51561.1"/>
    <property type="molecule type" value="Genomic_DNA"/>
</dbReference>
<dbReference type="RefSeq" id="WP_011385136.1">
    <property type="nucleotide sequence ID" value="NC_007626.1"/>
</dbReference>
<dbReference type="SMR" id="Q2W3L4"/>
<dbReference type="STRING" id="342108.amb2757"/>
<dbReference type="KEGG" id="mag:amb2757"/>
<dbReference type="HOGENOM" id="CLU_033172_1_2_5"/>
<dbReference type="OrthoDB" id="9786826at2"/>
<dbReference type="UniPathway" id="UPA00078">
    <property type="reaction ID" value="UER00162"/>
</dbReference>
<dbReference type="Proteomes" id="UP000007058">
    <property type="component" value="Chromosome"/>
</dbReference>
<dbReference type="GO" id="GO:0051537">
    <property type="term" value="F:2 iron, 2 sulfur cluster binding"/>
    <property type="evidence" value="ECO:0007669"/>
    <property type="project" value="UniProtKB-KW"/>
</dbReference>
<dbReference type="GO" id="GO:0051539">
    <property type="term" value="F:4 iron, 4 sulfur cluster binding"/>
    <property type="evidence" value="ECO:0007669"/>
    <property type="project" value="UniProtKB-KW"/>
</dbReference>
<dbReference type="GO" id="GO:0004076">
    <property type="term" value="F:biotin synthase activity"/>
    <property type="evidence" value="ECO:0007669"/>
    <property type="project" value="UniProtKB-UniRule"/>
</dbReference>
<dbReference type="GO" id="GO:0005506">
    <property type="term" value="F:iron ion binding"/>
    <property type="evidence" value="ECO:0007669"/>
    <property type="project" value="UniProtKB-UniRule"/>
</dbReference>
<dbReference type="GO" id="GO:0009102">
    <property type="term" value="P:biotin biosynthetic process"/>
    <property type="evidence" value="ECO:0007669"/>
    <property type="project" value="UniProtKB-UniRule"/>
</dbReference>
<dbReference type="CDD" id="cd01335">
    <property type="entry name" value="Radical_SAM"/>
    <property type="match status" value="1"/>
</dbReference>
<dbReference type="FunFam" id="3.20.20.70:FF:000011">
    <property type="entry name" value="Biotin synthase"/>
    <property type="match status" value="1"/>
</dbReference>
<dbReference type="Gene3D" id="3.20.20.70">
    <property type="entry name" value="Aldolase class I"/>
    <property type="match status" value="1"/>
</dbReference>
<dbReference type="HAMAP" id="MF_01694">
    <property type="entry name" value="BioB"/>
    <property type="match status" value="1"/>
</dbReference>
<dbReference type="InterPro" id="IPR013785">
    <property type="entry name" value="Aldolase_TIM"/>
</dbReference>
<dbReference type="InterPro" id="IPR010722">
    <property type="entry name" value="BATS_dom"/>
</dbReference>
<dbReference type="InterPro" id="IPR002684">
    <property type="entry name" value="Biotin_synth/BioAB"/>
</dbReference>
<dbReference type="InterPro" id="IPR024177">
    <property type="entry name" value="Biotin_synthase"/>
</dbReference>
<dbReference type="InterPro" id="IPR006638">
    <property type="entry name" value="Elp3/MiaA/NifB-like_rSAM"/>
</dbReference>
<dbReference type="InterPro" id="IPR007197">
    <property type="entry name" value="rSAM"/>
</dbReference>
<dbReference type="NCBIfam" id="TIGR00433">
    <property type="entry name" value="bioB"/>
    <property type="match status" value="1"/>
</dbReference>
<dbReference type="PANTHER" id="PTHR22976">
    <property type="entry name" value="BIOTIN SYNTHASE"/>
    <property type="match status" value="1"/>
</dbReference>
<dbReference type="PANTHER" id="PTHR22976:SF2">
    <property type="entry name" value="BIOTIN SYNTHASE, MITOCHONDRIAL"/>
    <property type="match status" value="1"/>
</dbReference>
<dbReference type="Pfam" id="PF06968">
    <property type="entry name" value="BATS"/>
    <property type="match status" value="1"/>
</dbReference>
<dbReference type="Pfam" id="PF04055">
    <property type="entry name" value="Radical_SAM"/>
    <property type="match status" value="1"/>
</dbReference>
<dbReference type="PIRSF" id="PIRSF001619">
    <property type="entry name" value="Biotin_synth"/>
    <property type="match status" value="1"/>
</dbReference>
<dbReference type="SFLD" id="SFLDF00272">
    <property type="entry name" value="biotin_synthase"/>
    <property type="match status" value="1"/>
</dbReference>
<dbReference type="SFLD" id="SFLDG01278">
    <property type="entry name" value="biotin_synthase_like"/>
    <property type="match status" value="1"/>
</dbReference>
<dbReference type="SMART" id="SM00876">
    <property type="entry name" value="BATS"/>
    <property type="match status" value="1"/>
</dbReference>
<dbReference type="SMART" id="SM00729">
    <property type="entry name" value="Elp3"/>
    <property type="match status" value="1"/>
</dbReference>
<dbReference type="SUPFAM" id="SSF102114">
    <property type="entry name" value="Radical SAM enzymes"/>
    <property type="match status" value="1"/>
</dbReference>
<dbReference type="PROSITE" id="PS51918">
    <property type="entry name" value="RADICAL_SAM"/>
    <property type="match status" value="1"/>
</dbReference>
<keyword id="KW-0001">2Fe-2S</keyword>
<keyword id="KW-0004">4Fe-4S</keyword>
<keyword id="KW-0093">Biotin biosynthesis</keyword>
<keyword id="KW-0408">Iron</keyword>
<keyword id="KW-0411">Iron-sulfur</keyword>
<keyword id="KW-0479">Metal-binding</keyword>
<keyword id="KW-0949">S-adenosyl-L-methionine</keyword>
<keyword id="KW-0808">Transferase</keyword>
<sequence length="326" mass="35667">MTAQAALATAANDGELRHDWSAEEIEALFALPFNDLMFEAQKVHRAHFDANRVQVSRLISIKTGSCPEDCSYCPQSAHYATGLEKEKLLAVEEVVESARQAKEEGASRFCMGAAWRGPKGDDFEVAVAMIEGVKALGMETCATFGLLDKWQAQRLKEAGLDYYNHNIDTSPEHYSEVITTRTFQDRLDTLDVVRDAGLHVCSGGIVGLGETRTDRARMIQTLANMPKHPDSVPINLLIPIQGTPLADAERPDSFDFIRTIAVARITMPKSFVRLSAGREGMTEEMQALCFLAGANSVFCGQKLLTAKNAAPGKDKSLFGKLGLQPM</sequence>
<reference key="1">
    <citation type="journal article" date="2005" name="DNA Res.">
        <title>Complete genome sequence of the facultative anaerobic magnetotactic bacterium Magnetospirillum sp. strain AMB-1.</title>
        <authorList>
            <person name="Matsunaga T."/>
            <person name="Okamura Y."/>
            <person name="Fukuda Y."/>
            <person name="Wahyudi A.T."/>
            <person name="Murase Y."/>
            <person name="Takeyama H."/>
        </authorList>
    </citation>
    <scope>NUCLEOTIDE SEQUENCE [LARGE SCALE GENOMIC DNA]</scope>
    <source>
        <strain>ATCC 700264 / AMB-1</strain>
    </source>
</reference>
<comment type="function">
    <text evidence="1">Catalyzes the conversion of dethiobiotin (DTB) to biotin by the insertion of a sulfur atom into dethiobiotin via a radical-based mechanism.</text>
</comment>
<comment type="catalytic activity">
    <reaction evidence="1">
        <text>(4R,5S)-dethiobiotin + (sulfur carrier)-SH + 2 reduced [2Fe-2S]-[ferredoxin] + 2 S-adenosyl-L-methionine = (sulfur carrier)-H + biotin + 2 5'-deoxyadenosine + 2 L-methionine + 2 oxidized [2Fe-2S]-[ferredoxin]</text>
        <dbReference type="Rhea" id="RHEA:22060"/>
        <dbReference type="Rhea" id="RHEA-COMP:10000"/>
        <dbReference type="Rhea" id="RHEA-COMP:10001"/>
        <dbReference type="Rhea" id="RHEA-COMP:14737"/>
        <dbReference type="Rhea" id="RHEA-COMP:14739"/>
        <dbReference type="ChEBI" id="CHEBI:17319"/>
        <dbReference type="ChEBI" id="CHEBI:29917"/>
        <dbReference type="ChEBI" id="CHEBI:33737"/>
        <dbReference type="ChEBI" id="CHEBI:33738"/>
        <dbReference type="ChEBI" id="CHEBI:57586"/>
        <dbReference type="ChEBI" id="CHEBI:57844"/>
        <dbReference type="ChEBI" id="CHEBI:59789"/>
        <dbReference type="ChEBI" id="CHEBI:64428"/>
        <dbReference type="ChEBI" id="CHEBI:149473"/>
        <dbReference type="EC" id="2.8.1.6"/>
    </reaction>
</comment>
<comment type="cofactor">
    <cofactor evidence="1">
        <name>[4Fe-4S] cluster</name>
        <dbReference type="ChEBI" id="CHEBI:49883"/>
    </cofactor>
    <text evidence="1">Binds 1 [4Fe-4S] cluster. The cluster is coordinated with 3 cysteines and an exchangeable S-adenosyl-L-methionine.</text>
</comment>
<comment type="cofactor">
    <cofactor evidence="1">
        <name>[2Fe-2S] cluster</name>
        <dbReference type="ChEBI" id="CHEBI:190135"/>
    </cofactor>
    <text evidence="1">Binds 1 [2Fe-2S] cluster. The cluster is coordinated with 3 cysteines and 1 arginine.</text>
</comment>
<comment type="pathway">
    <text evidence="1">Cofactor biosynthesis; biotin biosynthesis; biotin from 7,8-diaminononanoate: step 2/2.</text>
</comment>
<comment type="subunit">
    <text evidence="1">Homodimer.</text>
</comment>
<comment type="similarity">
    <text evidence="1">Belongs to the radical SAM superfamily. Biotin synthase family.</text>
</comment>
<feature type="chain" id="PRO_0000381451" description="Biotin synthase">
    <location>
        <begin position="1"/>
        <end position="326"/>
    </location>
</feature>
<feature type="domain" description="Radical SAM core" evidence="2">
    <location>
        <begin position="51"/>
        <end position="278"/>
    </location>
</feature>
<feature type="binding site" evidence="1">
    <location>
        <position position="66"/>
    </location>
    <ligand>
        <name>[4Fe-4S] cluster</name>
        <dbReference type="ChEBI" id="CHEBI:49883"/>
        <note>4Fe-4S-S-AdoMet</note>
    </ligand>
</feature>
<feature type="binding site" evidence="1">
    <location>
        <position position="70"/>
    </location>
    <ligand>
        <name>[4Fe-4S] cluster</name>
        <dbReference type="ChEBI" id="CHEBI:49883"/>
        <note>4Fe-4S-S-AdoMet</note>
    </ligand>
</feature>
<feature type="binding site" evidence="1">
    <location>
        <position position="73"/>
    </location>
    <ligand>
        <name>[4Fe-4S] cluster</name>
        <dbReference type="ChEBI" id="CHEBI:49883"/>
        <note>4Fe-4S-S-AdoMet</note>
    </ligand>
</feature>
<feature type="binding site" evidence="1">
    <location>
        <position position="110"/>
    </location>
    <ligand>
        <name>[2Fe-2S] cluster</name>
        <dbReference type="ChEBI" id="CHEBI:190135"/>
    </ligand>
</feature>
<feature type="binding site" evidence="1">
    <location>
        <position position="141"/>
    </location>
    <ligand>
        <name>[2Fe-2S] cluster</name>
        <dbReference type="ChEBI" id="CHEBI:190135"/>
    </ligand>
</feature>
<feature type="binding site" evidence="1">
    <location>
        <position position="201"/>
    </location>
    <ligand>
        <name>[2Fe-2S] cluster</name>
        <dbReference type="ChEBI" id="CHEBI:190135"/>
    </ligand>
</feature>
<feature type="binding site" evidence="1">
    <location>
        <position position="273"/>
    </location>
    <ligand>
        <name>[2Fe-2S] cluster</name>
        <dbReference type="ChEBI" id="CHEBI:190135"/>
    </ligand>
</feature>
<gene>
    <name evidence="1" type="primary">bioB</name>
    <name type="ordered locus">amb2757</name>
</gene>
<accession>Q2W3L4</accession>
<proteinExistence type="inferred from homology"/>
<name>BIOB_PARM1</name>